<organism>
    <name type="scientific">Mus musculus</name>
    <name type="common">Mouse</name>
    <dbReference type="NCBI Taxonomy" id="10090"/>
    <lineage>
        <taxon>Eukaryota</taxon>
        <taxon>Metazoa</taxon>
        <taxon>Chordata</taxon>
        <taxon>Craniata</taxon>
        <taxon>Vertebrata</taxon>
        <taxon>Euteleostomi</taxon>
        <taxon>Mammalia</taxon>
        <taxon>Eutheria</taxon>
        <taxon>Euarchontoglires</taxon>
        <taxon>Glires</taxon>
        <taxon>Rodentia</taxon>
        <taxon>Myomorpha</taxon>
        <taxon>Muroidea</taxon>
        <taxon>Muridae</taxon>
        <taxon>Murinae</taxon>
        <taxon>Mus</taxon>
        <taxon>Mus</taxon>
    </lineage>
</organism>
<proteinExistence type="evidence at protein level"/>
<protein>
    <recommendedName>
        <fullName>DnaJ homolog subfamily C member 16</fullName>
    </recommendedName>
    <alternativeName>
        <fullName evidence="1">Endoplasmic reticulum DNA J domain-containing protein 8</fullName>
        <shortName>ER-resident protein ERdj8</shortName>
        <shortName>ERdj8</shortName>
    </alternativeName>
</protein>
<accession>Q80TN4</accession>
<accession>Q811G1</accession>
<accession>Q8BHI2</accession>
<comment type="function">
    <text evidence="1">Plays an important role in regulating the size of autophagosomes during the formation process.</text>
</comment>
<comment type="subcellular location">
    <subcellularLocation>
        <location evidence="1">Endoplasmic reticulum membrane</location>
        <topology evidence="7">Single-pass type IV membrane protein</topology>
    </subcellularLocation>
</comment>
<comment type="sequence caution" evidence="7">
    <conflict type="erroneous initiation">
        <sequence resource="EMBL-CDS" id="AAH46424"/>
    </conflict>
    <text>Extended N-terminus.</text>
</comment>
<comment type="sequence caution" evidence="7">
    <conflict type="erroneous initiation">
        <sequence resource="EMBL-CDS" id="BAC65689"/>
    </conflict>
    <text>Truncated N-terminus.</text>
</comment>
<feature type="signal peptide" evidence="2">
    <location>
        <begin position="1"/>
        <end position="25"/>
    </location>
</feature>
<feature type="chain" id="PRO_0000236684" description="DnaJ homolog subfamily C member 16">
    <location>
        <begin position="26"/>
        <end position="772"/>
    </location>
</feature>
<feature type="topological domain" description="Cytoplasmic" evidence="2">
    <location>
        <begin position="26"/>
        <end position="533"/>
    </location>
</feature>
<feature type="transmembrane region" description="Helical; Anchor for type IV membrane protein" evidence="2">
    <location>
        <begin position="534"/>
        <end position="554"/>
    </location>
</feature>
<feature type="topological domain" description="Extracellular" evidence="2">
    <location>
        <begin position="555"/>
        <end position="772"/>
    </location>
</feature>
<feature type="domain" description="J" evidence="3">
    <location>
        <begin position="29"/>
        <end position="93"/>
    </location>
</feature>
<feature type="domain" description="Thioredoxin" evidence="4">
    <location>
        <begin position="119"/>
        <end position="245"/>
    </location>
</feature>
<feature type="region of interest" description="Disordered" evidence="5">
    <location>
        <begin position="560"/>
        <end position="591"/>
    </location>
</feature>
<feature type="compositionally biased region" description="Basic and acidic residues" evidence="5">
    <location>
        <begin position="561"/>
        <end position="580"/>
    </location>
</feature>
<feature type="glycosylation site" description="N-linked (GlcNAc...) asparagine" evidence="2">
    <location>
        <position position="629"/>
    </location>
</feature>
<feature type="sequence variant" description="In strain: Czech II." evidence="6">
    <original>G</original>
    <variation>A</variation>
    <location>
        <position position="478"/>
    </location>
</feature>
<feature type="strand" evidence="8">
    <location>
        <begin position="25"/>
        <end position="28"/>
    </location>
</feature>
<feature type="helix" evidence="8">
    <location>
        <begin position="30"/>
        <end position="34"/>
    </location>
</feature>
<feature type="helix" evidence="8">
    <location>
        <begin position="42"/>
        <end position="55"/>
    </location>
</feature>
<feature type="turn" evidence="8">
    <location>
        <begin position="58"/>
        <end position="60"/>
    </location>
</feature>
<feature type="helix" evidence="8">
    <location>
        <begin position="66"/>
        <end position="81"/>
    </location>
</feature>
<feature type="helix" evidence="8">
    <location>
        <begin position="83"/>
        <end position="92"/>
    </location>
</feature>
<sequence length="772" mass="89136">MELKRLGVSWRFLMVLVLILQSLSALDFDPYRVLGVSRTASQADIKKAYKKLAREWHPDKNKDPGAEDRFIQISKAYEILSNEEKRTNYDHYGDAGENQGYQKQQREHRFRHFHENFYFDESFFHFPFNAERRDSGDEKYLLHFSHYVNEVLPESFKRPYLIKITSDWCFSCIHIEPVWKEVVQELEGLGVGIGVVHAGYERRLAHHLGAHSTPSILGVISGKITFFHNAVVHENLRQFVESLLPGNLVEKVTNKNYVRFLSGWQQENKPHALLFGQTPAVPLMYKLTAFAYKDYVSFGYVYVGLRGVEEMTRQYNVNLYTPTMLIFKEHINKPADVIQARGLKKQVIEDFIAQNKYLLASRLTSQRLFHELCPVKRSHRQRKYCVVLLTAETNKVSKPFEAFLSFALANTQDTVRFVHVYSNRQQEFASTLLPDMEAFQGKSGVSILERRNTAGRVVFKTLEDPWTGSESDKFVLLGYLDQLRKDPAFLSSEAVLPDLTDELAPVFFLRWLYSVSDYLSDFWESLLHSNWREMMPLLSLIFSALFILFGTVMVQAFSDSNEERESHPADKEEVPEKAGKTEPSFTKESSSKIPKKGFVEVTELTDVTYTSNLVRLRPGHMNVVLILSNSTKTSLLQKFALEVYTFTGSSSLHFSFLTLDKHREWLEYLLEFAQDAAPIPNQYDKHFMERDYTGYVLALNGHKKYFCLFKPLKTVDEETVASCDPDSSRGKPSCGLGPKPLKGKLSKLSLWMERLLEGSLQRFYIPSWPELD</sequence>
<reference key="1">
    <citation type="journal article" date="2003" name="DNA Res.">
        <title>Prediction of the coding sequences of mouse homologues of KIAA gene: II. The complete nucleotide sequences of 400 mouse KIAA-homologous cDNAs identified by screening of terminal sequences of cDNA clones randomly sampled from size-fractionated libraries.</title>
        <authorList>
            <person name="Okazaki N."/>
            <person name="Kikuno R."/>
            <person name="Ohara R."/>
            <person name="Inamoto S."/>
            <person name="Aizawa H."/>
            <person name="Yuasa S."/>
            <person name="Nakajima D."/>
            <person name="Nagase T."/>
            <person name="Ohara O."/>
            <person name="Koga H."/>
        </authorList>
    </citation>
    <scope>NUCLEOTIDE SEQUENCE [LARGE SCALE MRNA]</scope>
    <source>
        <tissue>Brain</tissue>
    </source>
</reference>
<reference key="2">
    <citation type="journal article" date="2005" name="Science">
        <title>The transcriptional landscape of the mammalian genome.</title>
        <authorList>
            <person name="Carninci P."/>
            <person name="Kasukawa T."/>
            <person name="Katayama S."/>
            <person name="Gough J."/>
            <person name="Frith M.C."/>
            <person name="Maeda N."/>
            <person name="Oyama R."/>
            <person name="Ravasi T."/>
            <person name="Lenhard B."/>
            <person name="Wells C."/>
            <person name="Kodzius R."/>
            <person name="Shimokawa K."/>
            <person name="Bajic V.B."/>
            <person name="Brenner S.E."/>
            <person name="Batalov S."/>
            <person name="Forrest A.R."/>
            <person name="Zavolan M."/>
            <person name="Davis M.J."/>
            <person name="Wilming L.G."/>
            <person name="Aidinis V."/>
            <person name="Allen J.E."/>
            <person name="Ambesi-Impiombato A."/>
            <person name="Apweiler R."/>
            <person name="Aturaliya R.N."/>
            <person name="Bailey T.L."/>
            <person name="Bansal M."/>
            <person name="Baxter L."/>
            <person name="Beisel K.W."/>
            <person name="Bersano T."/>
            <person name="Bono H."/>
            <person name="Chalk A.M."/>
            <person name="Chiu K.P."/>
            <person name="Choudhary V."/>
            <person name="Christoffels A."/>
            <person name="Clutterbuck D.R."/>
            <person name="Crowe M.L."/>
            <person name="Dalla E."/>
            <person name="Dalrymple B.P."/>
            <person name="de Bono B."/>
            <person name="Della Gatta G."/>
            <person name="di Bernardo D."/>
            <person name="Down T."/>
            <person name="Engstrom P."/>
            <person name="Fagiolini M."/>
            <person name="Faulkner G."/>
            <person name="Fletcher C.F."/>
            <person name="Fukushima T."/>
            <person name="Furuno M."/>
            <person name="Futaki S."/>
            <person name="Gariboldi M."/>
            <person name="Georgii-Hemming P."/>
            <person name="Gingeras T.R."/>
            <person name="Gojobori T."/>
            <person name="Green R.E."/>
            <person name="Gustincich S."/>
            <person name="Harbers M."/>
            <person name="Hayashi Y."/>
            <person name="Hensch T.K."/>
            <person name="Hirokawa N."/>
            <person name="Hill D."/>
            <person name="Huminiecki L."/>
            <person name="Iacono M."/>
            <person name="Ikeo K."/>
            <person name="Iwama A."/>
            <person name="Ishikawa T."/>
            <person name="Jakt M."/>
            <person name="Kanapin A."/>
            <person name="Katoh M."/>
            <person name="Kawasawa Y."/>
            <person name="Kelso J."/>
            <person name="Kitamura H."/>
            <person name="Kitano H."/>
            <person name="Kollias G."/>
            <person name="Krishnan S.P."/>
            <person name="Kruger A."/>
            <person name="Kummerfeld S.K."/>
            <person name="Kurochkin I.V."/>
            <person name="Lareau L.F."/>
            <person name="Lazarevic D."/>
            <person name="Lipovich L."/>
            <person name="Liu J."/>
            <person name="Liuni S."/>
            <person name="McWilliam S."/>
            <person name="Madan Babu M."/>
            <person name="Madera M."/>
            <person name="Marchionni L."/>
            <person name="Matsuda H."/>
            <person name="Matsuzawa S."/>
            <person name="Miki H."/>
            <person name="Mignone F."/>
            <person name="Miyake S."/>
            <person name="Morris K."/>
            <person name="Mottagui-Tabar S."/>
            <person name="Mulder N."/>
            <person name="Nakano N."/>
            <person name="Nakauchi H."/>
            <person name="Ng P."/>
            <person name="Nilsson R."/>
            <person name="Nishiguchi S."/>
            <person name="Nishikawa S."/>
            <person name="Nori F."/>
            <person name="Ohara O."/>
            <person name="Okazaki Y."/>
            <person name="Orlando V."/>
            <person name="Pang K.C."/>
            <person name="Pavan W.J."/>
            <person name="Pavesi G."/>
            <person name="Pesole G."/>
            <person name="Petrovsky N."/>
            <person name="Piazza S."/>
            <person name="Reed J."/>
            <person name="Reid J.F."/>
            <person name="Ring B.Z."/>
            <person name="Ringwald M."/>
            <person name="Rost B."/>
            <person name="Ruan Y."/>
            <person name="Salzberg S.L."/>
            <person name="Sandelin A."/>
            <person name="Schneider C."/>
            <person name="Schoenbach C."/>
            <person name="Sekiguchi K."/>
            <person name="Semple C.A."/>
            <person name="Seno S."/>
            <person name="Sessa L."/>
            <person name="Sheng Y."/>
            <person name="Shibata Y."/>
            <person name="Shimada H."/>
            <person name="Shimada K."/>
            <person name="Silva D."/>
            <person name="Sinclair B."/>
            <person name="Sperling S."/>
            <person name="Stupka E."/>
            <person name="Sugiura K."/>
            <person name="Sultana R."/>
            <person name="Takenaka Y."/>
            <person name="Taki K."/>
            <person name="Tammoja K."/>
            <person name="Tan S.L."/>
            <person name="Tang S."/>
            <person name="Taylor M.S."/>
            <person name="Tegner J."/>
            <person name="Teichmann S.A."/>
            <person name="Ueda H.R."/>
            <person name="van Nimwegen E."/>
            <person name="Verardo R."/>
            <person name="Wei C.L."/>
            <person name="Yagi K."/>
            <person name="Yamanishi H."/>
            <person name="Zabarovsky E."/>
            <person name="Zhu S."/>
            <person name="Zimmer A."/>
            <person name="Hide W."/>
            <person name="Bult C."/>
            <person name="Grimmond S.M."/>
            <person name="Teasdale R.D."/>
            <person name="Liu E.T."/>
            <person name="Brusic V."/>
            <person name="Quackenbush J."/>
            <person name="Wahlestedt C."/>
            <person name="Mattick J.S."/>
            <person name="Hume D.A."/>
            <person name="Kai C."/>
            <person name="Sasaki D."/>
            <person name="Tomaru Y."/>
            <person name="Fukuda S."/>
            <person name="Kanamori-Katayama M."/>
            <person name="Suzuki M."/>
            <person name="Aoki J."/>
            <person name="Arakawa T."/>
            <person name="Iida J."/>
            <person name="Imamura K."/>
            <person name="Itoh M."/>
            <person name="Kato T."/>
            <person name="Kawaji H."/>
            <person name="Kawagashira N."/>
            <person name="Kawashima T."/>
            <person name="Kojima M."/>
            <person name="Kondo S."/>
            <person name="Konno H."/>
            <person name="Nakano K."/>
            <person name="Ninomiya N."/>
            <person name="Nishio T."/>
            <person name="Okada M."/>
            <person name="Plessy C."/>
            <person name="Shibata K."/>
            <person name="Shiraki T."/>
            <person name="Suzuki S."/>
            <person name="Tagami M."/>
            <person name="Waki K."/>
            <person name="Watahiki A."/>
            <person name="Okamura-Oho Y."/>
            <person name="Suzuki H."/>
            <person name="Kawai J."/>
            <person name="Hayashizaki Y."/>
        </authorList>
    </citation>
    <scope>NUCLEOTIDE SEQUENCE [LARGE SCALE MRNA]</scope>
    <source>
        <strain>C57BL/6J</strain>
        <strain>NOD</strain>
        <tissue>Embryo</tissue>
        <tissue>Skin</tissue>
    </source>
</reference>
<reference key="3">
    <citation type="journal article" date="2004" name="Genome Res.">
        <title>The status, quality, and expansion of the NIH full-length cDNA project: the Mammalian Gene Collection (MGC).</title>
        <authorList>
            <consortium name="The MGC Project Team"/>
        </authorList>
    </citation>
    <scope>NUCLEOTIDE SEQUENCE [LARGE SCALE MRNA] OF 312-772</scope>
    <scope>VARIANT ALA-478</scope>
    <source>
        <strain>Czech II</strain>
        <tissue>Mammary tumor</tissue>
    </source>
</reference>
<reference key="4">
    <citation type="journal article" date="2010" name="Cell">
        <title>A tissue-specific atlas of mouse protein phosphorylation and expression.</title>
        <authorList>
            <person name="Huttlin E.L."/>
            <person name="Jedrychowski M.P."/>
            <person name="Elias J.E."/>
            <person name="Goswami T."/>
            <person name="Rad R."/>
            <person name="Beausoleil S.A."/>
            <person name="Villen J."/>
            <person name="Haas W."/>
            <person name="Sowa M.E."/>
            <person name="Gygi S.P."/>
        </authorList>
    </citation>
    <scope>IDENTIFICATION BY MASS SPECTROMETRY [LARGE SCALE ANALYSIS]</scope>
    <source>
        <tissue>Liver</tissue>
    </source>
</reference>
<reference key="5">
    <citation type="submission" date="2005-11" db="PDB data bank">
        <title>Solution structure of the J domain of the pseudo DnaJ protein, mouse hypothetical mKIAA0962.</title>
        <authorList>
            <consortium name="RIKEN structural genomics initiative (RSGI)"/>
        </authorList>
    </citation>
    <scope>STRUCTURE BY NMR OF 19-93</scope>
</reference>
<gene>
    <name type="primary">Dnajc16</name>
    <name type="synonym">Erdj8</name>
    <name type="synonym">Kiaa0962</name>
</gene>
<keyword id="KW-0002">3D-structure</keyword>
<keyword id="KW-0072">Autophagy</keyword>
<keyword id="KW-0256">Endoplasmic reticulum</keyword>
<keyword id="KW-0325">Glycoprotein</keyword>
<keyword id="KW-0472">Membrane</keyword>
<keyword id="KW-1185">Reference proteome</keyword>
<keyword id="KW-0732">Signal</keyword>
<keyword id="KW-0812">Transmembrane</keyword>
<keyword id="KW-1133">Transmembrane helix</keyword>
<evidence type="ECO:0000250" key="1">
    <source>
        <dbReference type="UniProtKB" id="Q9Y2G8"/>
    </source>
</evidence>
<evidence type="ECO:0000255" key="2"/>
<evidence type="ECO:0000255" key="3">
    <source>
        <dbReference type="PROSITE-ProRule" id="PRU00286"/>
    </source>
</evidence>
<evidence type="ECO:0000255" key="4">
    <source>
        <dbReference type="PROSITE-ProRule" id="PRU00691"/>
    </source>
</evidence>
<evidence type="ECO:0000256" key="5">
    <source>
        <dbReference type="SAM" id="MobiDB-lite"/>
    </source>
</evidence>
<evidence type="ECO:0000269" key="6">
    <source>
    </source>
</evidence>
<evidence type="ECO:0000305" key="7"/>
<evidence type="ECO:0007829" key="8">
    <source>
        <dbReference type="PDB" id="2CUG"/>
    </source>
</evidence>
<dbReference type="EMBL" id="AK122407">
    <property type="protein sequence ID" value="BAC65689.1"/>
    <property type="status" value="ALT_INIT"/>
    <property type="molecule type" value="mRNA"/>
</dbReference>
<dbReference type="EMBL" id="AK028692">
    <property type="protein sequence ID" value="BAC26068.1"/>
    <property type="molecule type" value="mRNA"/>
</dbReference>
<dbReference type="EMBL" id="AK051048">
    <property type="protein sequence ID" value="BAC34510.1"/>
    <property type="molecule type" value="mRNA"/>
</dbReference>
<dbReference type="EMBL" id="AK154946">
    <property type="protein sequence ID" value="BAE32943.1"/>
    <property type="molecule type" value="mRNA"/>
</dbReference>
<dbReference type="EMBL" id="AK164023">
    <property type="protein sequence ID" value="BAE37591.1"/>
    <property type="molecule type" value="mRNA"/>
</dbReference>
<dbReference type="EMBL" id="BC046424">
    <property type="protein sequence ID" value="AAH46424.1"/>
    <property type="status" value="ALT_INIT"/>
    <property type="molecule type" value="mRNA"/>
</dbReference>
<dbReference type="CCDS" id="CCDS18882.1"/>
<dbReference type="RefSeq" id="NP_758841.1">
    <property type="nucleotide sequence ID" value="NM_172338.2"/>
</dbReference>
<dbReference type="RefSeq" id="XP_036019839.1">
    <property type="nucleotide sequence ID" value="XM_036163946.1"/>
</dbReference>
<dbReference type="PDB" id="2CUG">
    <property type="method" value="NMR"/>
    <property type="chains" value="A=19-93"/>
</dbReference>
<dbReference type="PDBsum" id="2CUG"/>
<dbReference type="SMR" id="Q80TN4"/>
<dbReference type="BioGRID" id="229490">
    <property type="interactions" value="5"/>
</dbReference>
<dbReference type="FunCoup" id="Q80TN4">
    <property type="interactions" value="2140"/>
</dbReference>
<dbReference type="STRING" id="10090.ENSMUSP00000048714"/>
<dbReference type="GlyCosmos" id="Q80TN4">
    <property type="glycosylation" value="1 site, No reported glycans"/>
</dbReference>
<dbReference type="GlyGen" id="Q80TN4">
    <property type="glycosylation" value="1 site"/>
</dbReference>
<dbReference type="iPTMnet" id="Q80TN4"/>
<dbReference type="PhosphoSitePlus" id="Q80TN4"/>
<dbReference type="SwissPalm" id="Q80TN4"/>
<dbReference type="PaxDb" id="10090-ENSMUSP00000048714"/>
<dbReference type="PeptideAtlas" id="Q80TN4"/>
<dbReference type="ProteomicsDB" id="279540"/>
<dbReference type="Pumba" id="Q80TN4"/>
<dbReference type="Antibodypedia" id="46653">
    <property type="antibodies" value="28 antibodies from 14 providers"/>
</dbReference>
<dbReference type="DNASU" id="214063"/>
<dbReference type="Ensembl" id="ENSMUST00000038014.11">
    <property type="protein sequence ID" value="ENSMUSP00000048714.5"/>
    <property type="gene ID" value="ENSMUSG00000040697.11"/>
</dbReference>
<dbReference type="GeneID" id="214063"/>
<dbReference type="KEGG" id="mmu:214063"/>
<dbReference type="UCSC" id="uc008vpf.1">
    <property type="organism name" value="mouse"/>
</dbReference>
<dbReference type="AGR" id="MGI:2442146"/>
<dbReference type="CTD" id="23341"/>
<dbReference type="MGI" id="MGI:2442146">
    <property type="gene designation" value="Dnajc16"/>
</dbReference>
<dbReference type="VEuPathDB" id="HostDB:ENSMUSG00000040697"/>
<dbReference type="eggNOG" id="KOG0715">
    <property type="taxonomic scope" value="Eukaryota"/>
</dbReference>
<dbReference type="GeneTree" id="ENSGT00940000155851"/>
<dbReference type="HOGENOM" id="CLU_020140_0_1_1"/>
<dbReference type="InParanoid" id="Q80TN4"/>
<dbReference type="OMA" id="QPEFAST"/>
<dbReference type="OrthoDB" id="10065037at2759"/>
<dbReference type="PhylomeDB" id="Q80TN4"/>
<dbReference type="TreeFam" id="TF312804"/>
<dbReference type="BioGRID-ORCS" id="214063">
    <property type="hits" value="2 hits in 76 CRISPR screens"/>
</dbReference>
<dbReference type="ChiTaRS" id="Dnajc16">
    <property type="organism name" value="mouse"/>
</dbReference>
<dbReference type="EvolutionaryTrace" id="Q80TN4"/>
<dbReference type="PRO" id="PR:Q80TN4"/>
<dbReference type="Proteomes" id="UP000000589">
    <property type="component" value="Chromosome 4"/>
</dbReference>
<dbReference type="RNAct" id="Q80TN4">
    <property type="molecule type" value="protein"/>
</dbReference>
<dbReference type="Bgee" id="ENSMUSG00000040697">
    <property type="expression patterns" value="Expressed in otolith organ and 232 other cell types or tissues"/>
</dbReference>
<dbReference type="ExpressionAtlas" id="Q80TN4">
    <property type="expression patterns" value="baseline and differential"/>
</dbReference>
<dbReference type="GO" id="GO:0005789">
    <property type="term" value="C:endoplasmic reticulum membrane"/>
    <property type="evidence" value="ECO:0000250"/>
    <property type="project" value="UniProtKB"/>
</dbReference>
<dbReference type="GO" id="GO:0016243">
    <property type="term" value="P:regulation of autophagosome size"/>
    <property type="evidence" value="ECO:0000250"/>
    <property type="project" value="UniProtKB"/>
</dbReference>
<dbReference type="CDD" id="cd06257">
    <property type="entry name" value="DnaJ"/>
    <property type="match status" value="1"/>
</dbReference>
<dbReference type="CDD" id="cd02963">
    <property type="entry name" value="TRX_DnaJ"/>
    <property type="match status" value="1"/>
</dbReference>
<dbReference type="Gene3D" id="1.10.287.110">
    <property type="entry name" value="DnaJ domain"/>
    <property type="match status" value="1"/>
</dbReference>
<dbReference type="Gene3D" id="3.40.30.10">
    <property type="entry name" value="Glutaredoxin"/>
    <property type="match status" value="1"/>
</dbReference>
<dbReference type="InterPro" id="IPR052448">
    <property type="entry name" value="DnaJ_C16_autophagy_reg"/>
</dbReference>
<dbReference type="InterPro" id="IPR001623">
    <property type="entry name" value="DnaJ_domain"/>
</dbReference>
<dbReference type="InterPro" id="IPR018253">
    <property type="entry name" value="DnaJ_domain_CS"/>
</dbReference>
<dbReference type="InterPro" id="IPR043361">
    <property type="entry name" value="DNAJC16_TRX"/>
</dbReference>
<dbReference type="InterPro" id="IPR036869">
    <property type="entry name" value="J_dom_sf"/>
</dbReference>
<dbReference type="InterPro" id="IPR036249">
    <property type="entry name" value="Thioredoxin-like_sf"/>
</dbReference>
<dbReference type="InterPro" id="IPR013766">
    <property type="entry name" value="Thioredoxin_domain"/>
</dbReference>
<dbReference type="PANTHER" id="PTHR44303">
    <property type="entry name" value="DNAJ HOMOLOG SUBFAMILY C MEMBER 16"/>
    <property type="match status" value="1"/>
</dbReference>
<dbReference type="PANTHER" id="PTHR44303:SF2">
    <property type="entry name" value="DNAJ HOMOLOG SUBFAMILY C MEMBER 16"/>
    <property type="match status" value="1"/>
</dbReference>
<dbReference type="Pfam" id="PF00226">
    <property type="entry name" value="DnaJ"/>
    <property type="match status" value="1"/>
</dbReference>
<dbReference type="Pfam" id="PF00085">
    <property type="entry name" value="Thioredoxin"/>
    <property type="match status" value="1"/>
</dbReference>
<dbReference type="PRINTS" id="PR00625">
    <property type="entry name" value="JDOMAIN"/>
</dbReference>
<dbReference type="SMART" id="SM00271">
    <property type="entry name" value="DnaJ"/>
    <property type="match status" value="1"/>
</dbReference>
<dbReference type="SUPFAM" id="SSF46565">
    <property type="entry name" value="Chaperone J-domain"/>
    <property type="match status" value="1"/>
</dbReference>
<dbReference type="SUPFAM" id="SSF52833">
    <property type="entry name" value="Thioredoxin-like"/>
    <property type="match status" value="1"/>
</dbReference>
<dbReference type="PROSITE" id="PS00636">
    <property type="entry name" value="DNAJ_1"/>
    <property type="match status" value="1"/>
</dbReference>
<dbReference type="PROSITE" id="PS50076">
    <property type="entry name" value="DNAJ_2"/>
    <property type="match status" value="1"/>
</dbReference>
<dbReference type="PROSITE" id="PS51352">
    <property type="entry name" value="THIOREDOXIN_2"/>
    <property type="match status" value="1"/>
</dbReference>
<name>DJC16_MOUSE</name>